<dbReference type="EC" id="5.3.2.-"/>
<dbReference type="EMBL" id="AE014074">
    <property type="protein sequence ID" value="AAM79404.1"/>
    <property type="molecule type" value="Genomic_DNA"/>
</dbReference>
<dbReference type="RefSeq" id="WP_002984671.1">
    <property type="nucleotide sequence ID" value="NC_004070.1"/>
</dbReference>
<dbReference type="SMR" id="P0DF84"/>
<dbReference type="KEGG" id="spg:SpyM3_0797"/>
<dbReference type="HOGENOM" id="CLU_148073_5_1_9"/>
<dbReference type="Proteomes" id="UP000000564">
    <property type="component" value="Chromosome"/>
</dbReference>
<dbReference type="GO" id="GO:0016853">
    <property type="term" value="F:isomerase activity"/>
    <property type="evidence" value="ECO:0007669"/>
    <property type="project" value="UniProtKB-KW"/>
</dbReference>
<dbReference type="Gene3D" id="3.30.429.10">
    <property type="entry name" value="Macrophage Migration Inhibitory Factor"/>
    <property type="match status" value="1"/>
</dbReference>
<dbReference type="InterPro" id="IPR004370">
    <property type="entry name" value="4-OT-like_dom"/>
</dbReference>
<dbReference type="InterPro" id="IPR014347">
    <property type="entry name" value="Tautomerase/MIF_sf"/>
</dbReference>
<dbReference type="NCBIfam" id="NF002571">
    <property type="entry name" value="PRK02220.1"/>
    <property type="match status" value="1"/>
</dbReference>
<dbReference type="NCBIfam" id="NF002622">
    <property type="entry name" value="PRK02289.1"/>
    <property type="match status" value="1"/>
</dbReference>
<dbReference type="PANTHER" id="PTHR35530:SF1">
    <property type="entry name" value="2-HYDROXYMUCONATE TAUTOMERASE"/>
    <property type="match status" value="1"/>
</dbReference>
<dbReference type="PANTHER" id="PTHR35530">
    <property type="entry name" value="TAUTOMERASE-RELATED"/>
    <property type="match status" value="1"/>
</dbReference>
<dbReference type="Pfam" id="PF01361">
    <property type="entry name" value="Tautomerase"/>
    <property type="match status" value="1"/>
</dbReference>
<dbReference type="SUPFAM" id="SSF55331">
    <property type="entry name" value="Tautomerase/MIF"/>
    <property type="match status" value="1"/>
</dbReference>
<keyword id="KW-0413">Isomerase</keyword>
<reference key="1">
    <citation type="journal article" date="2002" name="Proc. Natl. Acad. Sci. U.S.A.">
        <title>Genome sequence of a serotype M3 strain of group A Streptococcus: phage-encoded toxins, the high-virulence phenotype, and clone emergence.</title>
        <authorList>
            <person name="Beres S.B."/>
            <person name="Sylva G.L."/>
            <person name="Barbian K.D."/>
            <person name="Lei B."/>
            <person name="Hoff J.S."/>
            <person name="Mammarella N.D."/>
            <person name="Liu M.-Y."/>
            <person name="Smoot J.C."/>
            <person name="Porcella S.F."/>
            <person name="Parkins L.D."/>
            <person name="Campbell D.S."/>
            <person name="Smith T.M."/>
            <person name="McCormick J.K."/>
            <person name="Leung D.Y.M."/>
            <person name="Schlievert P.M."/>
            <person name="Musser J.M."/>
        </authorList>
    </citation>
    <scope>NUCLEOTIDE SEQUENCE [LARGE SCALE GENOMIC DNA]</scope>
    <source>
        <strain>ATCC BAA-595 / MGAS315</strain>
    </source>
</reference>
<feature type="initiator methionine" description="Removed" evidence="1">
    <location>
        <position position="1"/>
    </location>
</feature>
<feature type="chain" id="PRO_0000209556" description="Probable tautomerase SpyM3_0797">
    <location>
        <begin position="2"/>
        <end position="61"/>
    </location>
</feature>
<feature type="active site" description="Proton acceptor; via imino nitrogen" evidence="1">
    <location>
        <position position="2"/>
    </location>
</feature>
<proteinExistence type="inferred from homology"/>
<sequence>MPFVTIDLFEGRSQEQKNQLAREVTEVVSRIAKAPKENIHVFINDMPEGTYYPQGEMKQKS</sequence>
<protein>
    <recommendedName>
        <fullName>Probable tautomerase SpyM3_0797</fullName>
        <ecNumber>5.3.2.-</ecNumber>
    </recommendedName>
</protein>
<organism>
    <name type="scientific">Streptococcus pyogenes serotype M3 (strain ATCC BAA-595 / MGAS315)</name>
    <dbReference type="NCBI Taxonomy" id="198466"/>
    <lineage>
        <taxon>Bacteria</taxon>
        <taxon>Bacillati</taxon>
        <taxon>Bacillota</taxon>
        <taxon>Bacilli</taxon>
        <taxon>Lactobacillales</taxon>
        <taxon>Streptococcaceae</taxon>
        <taxon>Streptococcus</taxon>
    </lineage>
</organism>
<accession>P0DF84</accession>
<accession>P67533</accession>
<accession>Q99ZP7</accession>
<gene>
    <name type="ordered locus">SpyM3_0797</name>
</gene>
<evidence type="ECO:0000250" key="1"/>
<evidence type="ECO:0000305" key="2"/>
<name>Y797_STRP3</name>
<comment type="similarity">
    <text evidence="2">Belongs to the 4-oxalocrotonate tautomerase family.</text>
</comment>